<organism>
    <name type="scientific">Trichechus inunguis</name>
    <name type="common">Amazon manatee</name>
    <name type="synonym">Brazilian manatee</name>
    <dbReference type="NCBI Taxonomy" id="9777"/>
    <lineage>
        <taxon>Eukaryota</taxon>
        <taxon>Metazoa</taxon>
        <taxon>Chordata</taxon>
        <taxon>Craniata</taxon>
        <taxon>Vertebrata</taxon>
        <taxon>Euteleostomi</taxon>
        <taxon>Mammalia</taxon>
        <taxon>Eutheria</taxon>
        <taxon>Afrotheria</taxon>
        <taxon>Sirenia</taxon>
        <taxon>Trichechidae</taxon>
        <taxon>Trichechus</taxon>
    </lineage>
</organism>
<protein>
    <recommendedName>
        <fullName>Hemoglobin subunit alpha</fullName>
    </recommendedName>
    <alternativeName>
        <fullName>Alpha-globin</fullName>
    </alternativeName>
    <alternativeName>
        <fullName>Hemoglobin alpha chain</fullName>
    </alternativeName>
    <component>
        <recommendedName>
            <fullName evidence="2">Hemopressin</fullName>
        </recommendedName>
    </component>
</protein>
<reference key="1">
    <citation type="journal article" date="1988" name="Biol. Chem. Hoppe-Seyler">
        <title>The primary structure of the hemoglobin of the Brazilian manatee (Trichechus inunguis, Sirenia).</title>
        <authorList>
            <person name="Kleinschmidt T."/>
            <person name="Braunitzer G."/>
            <person name="Best R."/>
        </authorList>
    </citation>
    <scope>PROTEIN SEQUENCE</scope>
</reference>
<reference key="2">
    <citation type="journal article" date="1986" name="Mol. Biol. Evol.">
        <title>Paenungulata: a comparison of the hemoglobin sequences from elephant, hyrax, and manatee.</title>
        <authorList>
            <person name="Kleinschmidt T."/>
            <person name="Czelusniak J."/>
            <person name="Goodman M."/>
            <person name="Braunitzer G."/>
        </authorList>
    </citation>
    <scope>PROTEIN SEQUENCE</scope>
</reference>
<keyword id="KW-0007">Acetylation</keyword>
<keyword id="KW-0903">Direct protein sequencing</keyword>
<keyword id="KW-0349">Heme</keyword>
<keyword id="KW-0408">Iron</keyword>
<keyword id="KW-0479">Metal-binding</keyword>
<keyword id="KW-0561">Oxygen transport</keyword>
<keyword id="KW-0597">Phosphoprotein</keyword>
<keyword id="KW-0813">Transport</keyword>
<accession>P07414</accession>
<sequence length="141" mass="15647">VLSDEDKTNVKTFWGKIGTHTGEYGGEALERMFLSFPTTKTYFPHFDLSHGSGQIKAHGKKVADALTRAVGHLEDLPGTLSELSDLHAHRLRVDPVNFKLLSHCLLVTLSSHLREDFTPSVHASLDKFLSSVSTVLTSKYR</sequence>
<evidence type="ECO:0000250" key="1">
    <source>
        <dbReference type="UniProtKB" id="P01942"/>
    </source>
</evidence>
<evidence type="ECO:0000250" key="2">
    <source>
        <dbReference type="UniProtKB" id="P01946"/>
    </source>
</evidence>
<evidence type="ECO:0000250" key="3">
    <source>
        <dbReference type="UniProtKB" id="P69905"/>
    </source>
</evidence>
<evidence type="ECO:0000255" key="4">
    <source>
        <dbReference type="PROSITE-ProRule" id="PRU00238"/>
    </source>
</evidence>
<proteinExistence type="evidence at protein level"/>
<feature type="chain" id="PRO_0000052791" description="Hemoglobin subunit alpha">
    <location>
        <begin position="1"/>
        <end position="141"/>
    </location>
</feature>
<feature type="peptide" id="PRO_0000455954" description="Hemopressin" evidence="2">
    <location>
        <begin position="95"/>
        <end position="103"/>
    </location>
</feature>
<feature type="domain" description="Globin" evidence="4">
    <location>
        <begin position="1"/>
        <end position="141"/>
    </location>
</feature>
<feature type="binding site" evidence="4">
    <location>
        <position position="58"/>
    </location>
    <ligand>
        <name>O2</name>
        <dbReference type="ChEBI" id="CHEBI:15379"/>
    </ligand>
</feature>
<feature type="binding site" description="proximal binding residue" evidence="4">
    <location>
        <position position="87"/>
    </location>
    <ligand>
        <name>heme b</name>
        <dbReference type="ChEBI" id="CHEBI:60344"/>
    </ligand>
    <ligandPart>
        <name>Fe</name>
        <dbReference type="ChEBI" id="CHEBI:18248"/>
    </ligandPart>
</feature>
<feature type="modified residue" description="Phosphoserine" evidence="3">
    <location>
        <position position="3"/>
    </location>
</feature>
<feature type="modified residue" description="N6-succinyllysine" evidence="1">
    <location>
        <position position="7"/>
    </location>
</feature>
<feature type="modified residue" description="Phosphothreonine" evidence="3">
    <location>
        <position position="8"/>
    </location>
</feature>
<feature type="modified residue" description="N6-succinyllysine" evidence="1">
    <location>
        <position position="11"/>
    </location>
</feature>
<feature type="modified residue" description="N6-acetyllysine; alternate" evidence="3">
    <location>
        <position position="16"/>
    </location>
</feature>
<feature type="modified residue" description="N6-succinyllysine; alternate" evidence="1">
    <location>
        <position position="16"/>
    </location>
</feature>
<feature type="modified residue" description="Phosphotyrosine" evidence="3">
    <location>
        <position position="24"/>
    </location>
</feature>
<feature type="modified residue" description="Phosphoserine" evidence="3">
    <location>
        <position position="35"/>
    </location>
</feature>
<feature type="modified residue" description="N6-succinyllysine" evidence="1">
    <location>
        <position position="40"/>
    </location>
</feature>
<feature type="modified residue" description="Phosphoserine" evidence="3">
    <location>
        <position position="49"/>
    </location>
</feature>
<feature type="modified residue" description="Phosphoserine" evidence="1">
    <location>
        <position position="102"/>
    </location>
</feature>
<feature type="modified residue" description="Phosphothreonine" evidence="1">
    <location>
        <position position="108"/>
    </location>
</feature>
<feature type="modified residue" description="Phosphoserine" evidence="1">
    <location>
        <position position="124"/>
    </location>
</feature>
<feature type="modified residue" description="Phosphoserine" evidence="1">
    <location>
        <position position="131"/>
    </location>
</feature>
<feature type="modified residue" description="Phosphothreonine" evidence="1">
    <location>
        <position position="134"/>
    </location>
</feature>
<feature type="modified residue" description="Phosphothreonine" evidence="1">
    <location>
        <position position="137"/>
    </location>
</feature>
<feature type="modified residue" description="Phosphoserine" evidence="1">
    <location>
        <position position="138"/>
    </location>
</feature>
<dbReference type="PIR" id="A24929">
    <property type="entry name" value="HAEMA"/>
</dbReference>
<dbReference type="SMR" id="P07414"/>
<dbReference type="GO" id="GO:0072562">
    <property type="term" value="C:blood microparticle"/>
    <property type="evidence" value="ECO:0007669"/>
    <property type="project" value="TreeGrafter"/>
</dbReference>
<dbReference type="GO" id="GO:0031838">
    <property type="term" value="C:haptoglobin-hemoglobin complex"/>
    <property type="evidence" value="ECO:0007669"/>
    <property type="project" value="TreeGrafter"/>
</dbReference>
<dbReference type="GO" id="GO:0005833">
    <property type="term" value="C:hemoglobin complex"/>
    <property type="evidence" value="ECO:0007669"/>
    <property type="project" value="InterPro"/>
</dbReference>
<dbReference type="GO" id="GO:0031720">
    <property type="term" value="F:haptoglobin binding"/>
    <property type="evidence" value="ECO:0007669"/>
    <property type="project" value="TreeGrafter"/>
</dbReference>
<dbReference type="GO" id="GO:0020037">
    <property type="term" value="F:heme binding"/>
    <property type="evidence" value="ECO:0007669"/>
    <property type="project" value="InterPro"/>
</dbReference>
<dbReference type="GO" id="GO:0046872">
    <property type="term" value="F:metal ion binding"/>
    <property type="evidence" value="ECO:0007669"/>
    <property type="project" value="UniProtKB-KW"/>
</dbReference>
<dbReference type="GO" id="GO:0043177">
    <property type="term" value="F:organic acid binding"/>
    <property type="evidence" value="ECO:0007669"/>
    <property type="project" value="TreeGrafter"/>
</dbReference>
<dbReference type="GO" id="GO:0019825">
    <property type="term" value="F:oxygen binding"/>
    <property type="evidence" value="ECO:0007669"/>
    <property type="project" value="InterPro"/>
</dbReference>
<dbReference type="GO" id="GO:0005344">
    <property type="term" value="F:oxygen carrier activity"/>
    <property type="evidence" value="ECO:0007669"/>
    <property type="project" value="UniProtKB-KW"/>
</dbReference>
<dbReference type="GO" id="GO:0004601">
    <property type="term" value="F:peroxidase activity"/>
    <property type="evidence" value="ECO:0007669"/>
    <property type="project" value="TreeGrafter"/>
</dbReference>
<dbReference type="GO" id="GO:0042744">
    <property type="term" value="P:hydrogen peroxide catabolic process"/>
    <property type="evidence" value="ECO:0007669"/>
    <property type="project" value="TreeGrafter"/>
</dbReference>
<dbReference type="CDD" id="cd08927">
    <property type="entry name" value="Hb-alpha-like"/>
    <property type="match status" value="1"/>
</dbReference>
<dbReference type="FunFam" id="1.10.490.10:FF:000002">
    <property type="entry name" value="Hemoglobin subunit alpha"/>
    <property type="match status" value="1"/>
</dbReference>
<dbReference type="Gene3D" id="1.10.490.10">
    <property type="entry name" value="Globins"/>
    <property type="match status" value="1"/>
</dbReference>
<dbReference type="InterPro" id="IPR000971">
    <property type="entry name" value="Globin"/>
</dbReference>
<dbReference type="InterPro" id="IPR009050">
    <property type="entry name" value="Globin-like_sf"/>
</dbReference>
<dbReference type="InterPro" id="IPR012292">
    <property type="entry name" value="Globin/Proto"/>
</dbReference>
<dbReference type="InterPro" id="IPR002338">
    <property type="entry name" value="Hemoglobin_a-typ"/>
</dbReference>
<dbReference type="InterPro" id="IPR050056">
    <property type="entry name" value="Hemoglobin_oxygen_transport"/>
</dbReference>
<dbReference type="PANTHER" id="PTHR11442">
    <property type="entry name" value="HEMOGLOBIN FAMILY MEMBER"/>
    <property type="match status" value="1"/>
</dbReference>
<dbReference type="PANTHER" id="PTHR11442:SF48">
    <property type="entry name" value="HEMOGLOBIN SUBUNIT ALPHA"/>
    <property type="match status" value="1"/>
</dbReference>
<dbReference type="Pfam" id="PF00042">
    <property type="entry name" value="Globin"/>
    <property type="match status" value="1"/>
</dbReference>
<dbReference type="PRINTS" id="PR00612">
    <property type="entry name" value="ALPHAHAEM"/>
</dbReference>
<dbReference type="SUPFAM" id="SSF46458">
    <property type="entry name" value="Globin-like"/>
    <property type="match status" value="1"/>
</dbReference>
<dbReference type="PROSITE" id="PS01033">
    <property type="entry name" value="GLOBIN"/>
    <property type="match status" value="1"/>
</dbReference>
<name>HBA_TRIIN</name>
<comment type="function">
    <text>Involved in oxygen transport from the lung to the various peripheral tissues.</text>
</comment>
<comment type="function">
    <molecule>Hemopressin</molecule>
    <text evidence="2">Hemopressin acts as an antagonist peptide of the cannabinoid receptor CNR1. Hemopressin-binding efficiently blocks cannabinoid receptor CNR1 and subsequent signaling.</text>
</comment>
<comment type="subunit">
    <text>Heterotetramer of two alpha chains and two beta chains.</text>
</comment>
<comment type="tissue specificity">
    <text>Red blood cells.</text>
</comment>
<comment type="similarity">
    <text evidence="4">Belongs to the globin family.</text>
</comment>
<gene>
    <name type="primary">HBA</name>
</gene>